<keyword id="KW-0067">ATP-binding</keyword>
<keyword id="KW-1003">Cell membrane</keyword>
<keyword id="KW-0472">Membrane</keyword>
<keyword id="KW-0547">Nucleotide-binding</keyword>
<keyword id="KW-0677">Repeat</keyword>
<keyword id="KW-0762">Sugar transport</keyword>
<keyword id="KW-1278">Translocase</keyword>
<keyword id="KW-0813">Transport</keyword>
<accession>Q9S472</accession>
<feature type="chain" id="PRO_0000091935" description="L-arabinose transport ATP-binding protein AraG">
    <location>
        <begin position="1"/>
        <end position="513"/>
    </location>
</feature>
<feature type="domain" description="ABC transporter 1" evidence="2">
    <location>
        <begin position="6"/>
        <end position="243"/>
    </location>
</feature>
<feature type="domain" description="ABC transporter 2" evidence="2">
    <location>
        <begin position="264"/>
        <end position="508"/>
    </location>
</feature>
<feature type="binding site" evidence="2">
    <location>
        <begin position="38"/>
        <end position="45"/>
    </location>
    <ligand>
        <name>ATP</name>
        <dbReference type="ChEBI" id="CHEBI:30616"/>
    </ligand>
</feature>
<name>ARAG_GEOSE</name>
<proteinExistence type="inferred from homology"/>
<comment type="function">
    <text>Part of the binding-protein-dependent transport system for L-arabinose. Probably responsible for energy coupling to the transport system.</text>
</comment>
<comment type="catalytic activity">
    <reaction>
        <text>L-arabinose(out) + ATP + H2O = L-arabinose(in) + ADP + phosphate + H(+)</text>
        <dbReference type="Rhea" id="RHEA:30007"/>
        <dbReference type="ChEBI" id="CHEBI:15377"/>
        <dbReference type="ChEBI" id="CHEBI:15378"/>
        <dbReference type="ChEBI" id="CHEBI:17535"/>
        <dbReference type="ChEBI" id="CHEBI:30616"/>
        <dbReference type="ChEBI" id="CHEBI:43474"/>
        <dbReference type="ChEBI" id="CHEBI:456216"/>
        <dbReference type="EC" id="7.5.2.12"/>
    </reaction>
</comment>
<comment type="subcellular location">
    <subcellularLocation>
        <location evidence="1">Cell membrane</location>
        <topology evidence="1">Peripheral membrane protein</topology>
    </subcellularLocation>
</comment>
<comment type="similarity">
    <text evidence="3">Belongs to the ABC transporter superfamily.</text>
</comment>
<evidence type="ECO:0000250" key="1"/>
<evidence type="ECO:0000255" key="2">
    <source>
        <dbReference type="PROSITE-ProRule" id="PRU00434"/>
    </source>
</evidence>
<evidence type="ECO:0000305" key="3"/>
<sequence length="513" mass="57160">MSEFILEMRGITKQFPGVKALDNVNFKVREGEIHALCGENGAGKSTLMKVLSGVYPYGTYDGEIVFKGEVCKFKNIKQSEQLGIVIIHQELALIPYLSIAENIFLGNERAKKGIINWNETIAQTKKLLQKVGLEESPHTLVGQLGVGKQQLVEIAKALAKDVKLLILDEPTAALNEDDSENLLNLLLELKKQGLSAIIISHKLNEITKVADSITILRDGKTIETLDMKHDEVTEDRIIRGMVGRDLTNRYPARTPKIGEVIFEVKNWTVYHPIYSERKVLDHINLSIRRGEIVGIAGLMGAGRTELAMSIFGRSYGKKISGEIWKNGVKIDVSDVSKAIANGIAYVTEDRKGNGLILMEDIRKNITLSRLGKISNHFVVDENQEIVESERFRDQFKIKTPSVFQKVEALSGGNQQKVVLSKWIFAEPDILILDEPTRGIDVGAKYEIYTIIQQLADAGKGILMISSELPEILGMCDRIYVMSEGRITGEVSREEATQEKLMRLMTKTAIQEGA</sequence>
<dbReference type="EC" id="7.5.2.12"/>
<dbReference type="EMBL" id="AF160811">
    <property type="protein sequence ID" value="AAD45713.1"/>
    <property type="molecule type" value="Genomic_DNA"/>
</dbReference>
<dbReference type="SMR" id="Q9S472"/>
<dbReference type="GO" id="GO:0005886">
    <property type="term" value="C:plasma membrane"/>
    <property type="evidence" value="ECO:0007669"/>
    <property type="project" value="UniProtKB-SubCell"/>
</dbReference>
<dbReference type="GO" id="GO:0015612">
    <property type="term" value="F:ABC-type L-arabinose transporter activity"/>
    <property type="evidence" value="ECO:0007669"/>
    <property type="project" value="UniProtKB-EC"/>
</dbReference>
<dbReference type="GO" id="GO:0005524">
    <property type="term" value="F:ATP binding"/>
    <property type="evidence" value="ECO:0007669"/>
    <property type="project" value="UniProtKB-KW"/>
</dbReference>
<dbReference type="GO" id="GO:0016887">
    <property type="term" value="F:ATP hydrolysis activity"/>
    <property type="evidence" value="ECO:0007669"/>
    <property type="project" value="InterPro"/>
</dbReference>
<dbReference type="CDD" id="cd03216">
    <property type="entry name" value="ABC_Carb_Monos_I"/>
    <property type="match status" value="1"/>
</dbReference>
<dbReference type="CDD" id="cd03215">
    <property type="entry name" value="ABC_Carb_Monos_II"/>
    <property type="match status" value="1"/>
</dbReference>
<dbReference type="FunFam" id="3.40.50.300:FF:000127">
    <property type="entry name" value="Ribose import ATP-binding protein RbsA"/>
    <property type="match status" value="1"/>
</dbReference>
<dbReference type="Gene3D" id="3.40.50.300">
    <property type="entry name" value="P-loop containing nucleotide triphosphate hydrolases"/>
    <property type="match status" value="2"/>
</dbReference>
<dbReference type="InterPro" id="IPR003593">
    <property type="entry name" value="AAA+_ATPase"/>
</dbReference>
<dbReference type="InterPro" id="IPR050107">
    <property type="entry name" value="ABC_carbohydrate_import_ATPase"/>
</dbReference>
<dbReference type="InterPro" id="IPR003439">
    <property type="entry name" value="ABC_transporter-like_ATP-bd"/>
</dbReference>
<dbReference type="InterPro" id="IPR017871">
    <property type="entry name" value="ABC_transporter-like_CS"/>
</dbReference>
<dbReference type="InterPro" id="IPR053466">
    <property type="entry name" value="L-arabinose_ABC_transporter"/>
</dbReference>
<dbReference type="InterPro" id="IPR027417">
    <property type="entry name" value="P-loop_NTPase"/>
</dbReference>
<dbReference type="NCBIfam" id="NF040905">
    <property type="entry name" value="GguA"/>
    <property type="match status" value="1"/>
</dbReference>
<dbReference type="PANTHER" id="PTHR43790">
    <property type="entry name" value="CARBOHYDRATE TRANSPORT ATP-BINDING PROTEIN MG119-RELATED"/>
    <property type="match status" value="1"/>
</dbReference>
<dbReference type="PANTHER" id="PTHR43790:SF1">
    <property type="entry name" value="XYLOSE IMPORT ATP-BINDING PROTEIN XYLG"/>
    <property type="match status" value="1"/>
</dbReference>
<dbReference type="Pfam" id="PF00005">
    <property type="entry name" value="ABC_tran"/>
    <property type="match status" value="2"/>
</dbReference>
<dbReference type="SMART" id="SM00382">
    <property type="entry name" value="AAA"/>
    <property type="match status" value="2"/>
</dbReference>
<dbReference type="SUPFAM" id="SSF52540">
    <property type="entry name" value="P-loop containing nucleoside triphosphate hydrolases"/>
    <property type="match status" value="2"/>
</dbReference>
<dbReference type="PROSITE" id="PS00211">
    <property type="entry name" value="ABC_TRANSPORTER_1"/>
    <property type="match status" value="1"/>
</dbReference>
<dbReference type="PROSITE" id="PS50893">
    <property type="entry name" value="ABC_TRANSPORTER_2"/>
    <property type="match status" value="2"/>
</dbReference>
<organism>
    <name type="scientific">Geobacillus stearothermophilus</name>
    <name type="common">Bacillus stearothermophilus</name>
    <dbReference type="NCBI Taxonomy" id="1422"/>
    <lineage>
        <taxon>Bacteria</taxon>
        <taxon>Bacillati</taxon>
        <taxon>Bacillota</taxon>
        <taxon>Bacilli</taxon>
        <taxon>Bacillales</taxon>
        <taxon>Anoxybacillaceae</taxon>
        <taxon>Geobacillus</taxon>
    </lineage>
</organism>
<gene>
    <name type="primary">araG</name>
</gene>
<protein>
    <recommendedName>
        <fullName>L-arabinose transport ATP-binding protein AraG</fullName>
        <ecNumber>7.5.2.12</ecNumber>
    </recommendedName>
</protein>
<reference key="1">
    <citation type="submission" date="1999-06" db="EMBL/GenBank/DDBJ databases">
        <title>The L-arabinose utilization gene cluster from Bacillus stearothermophilus T-6.</title>
        <authorList>
            <person name="Gilead-Gropper S."/>
            <person name="Shoham Y."/>
        </authorList>
    </citation>
    <scope>NUCLEOTIDE SEQUENCE [GENOMIC DNA]</scope>
    <source>
        <strain>T-6 / NCIMB 40222</strain>
    </source>
</reference>